<proteinExistence type="inferred from homology"/>
<reference key="1">
    <citation type="journal article" date="2005" name="Nature">
        <title>Genome sequencing and analysis of Aspergillus oryzae.</title>
        <authorList>
            <person name="Machida M."/>
            <person name="Asai K."/>
            <person name="Sano M."/>
            <person name="Tanaka T."/>
            <person name="Kumagai T."/>
            <person name="Terai G."/>
            <person name="Kusumoto K."/>
            <person name="Arima T."/>
            <person name="Akita O."/>
            <person name="Kashiwagi Y."/>
            <person name="Abe K."/>
            <person name="Gomi K."/>
            <person name="Horiuchi H."/>
            <person name="Kitamoto K."/>
            <person name="Kobayashi T."/>
            <person name="Takeuchi M."/>
            <person name="Denning D.W."/>
            <person name="Galagan J.E."/>
            <person name="Nierman W.C."/>
            <person name="Yu J."/>
            <person name="Archer D.B."/>
            <person name="Bennett J.W."/>
            <person name="Bhatnagar D."/>
            <person name="Cleveland T.E."/>
            <person name="Fedorova N.D."/>
            <person name="Gotoh O."/>
            <person name="Horikawa H."/>
            <person name="Hosoyama A."/>
            <person name="Ichinomiya M."/>
            <person name="Igarashi R."/>
            <person name="Iwashita K."/>
            <person name="Juvvadi P.R."/>
            <person name="Kato M."/>
            <person name="Kato Y."/>
            <person name="Kin T."/>
            <person name="Kokubun A."/>
            <person name="Maeda H."/>
            <person name="Maeyama N."/>
            <person name="Maruyama J."/>
            <person name="Nagasaki H."/>
            <person name="Nakajima T."/>
            <person name="Oda K."/>
            <person name="Okada K."/>
            <person name="Paulsen I."/>
            <person name="Sakamoto K."/>
            <person name="Sawano T."/>
            <person name="Takahashi M."/>
            <person name="Takase K."/>
            <person name="Terabayashi Y."/>
            <person name="Wortman J.R."/>
            <person name="Yamada O."/>
            <person name="Yamagata Y."/>
            <person name="Anazawa H."/>
            <person name="Hata Y."/>
            <person name="Koide Y."/>
            <person name="Komori T."/>
            <person name="Koyama Y."/>
            <person name="Minetoki T."/>
            <person name="Suharnan S."/>
            <person name="Tanaka A."/>
            <person name="Isono K."/>
            <person name="Kuhara S."/>
            <person name="Ogasawara N."/>
            <person name="Kikuchi H."/>
        </authorList>
    </citation>
    <scope>NUCLEOTIDE SEQUENCE [LARGE SCALE GENOMIC DNA]</scope>
    <source>
        <strain>ATCC 42149 / RIB 40</strain>
    </source>
</reference>
<name>SFH5_ASPOR</name>
<accession>Q2UA18</accession>
<evidence type="ECO:0000250" key="1">
    <source>
        <dbReference type="UniProtKB" id="A6ZQI5"/>
    </source>
</evidence>
<evidence type="ECO:0000250" key="2">
    <source>
        <dbReference type="UniProtKB" id="P47008"/>
    </source>
</evidence>
<evidence type="ECO:0000255" key="3">
    <source>
        <dbReference type="PROSITE-ProRule" id="PRU00056"/>
    </source>
</evidence>
<evidence type="ECO:0000256" key="4">
    <source>
        <dbReference type="SAM" id="MobiDB-lite"/>
    </source>
</evidence>
<evidence type="ECO:0000305" key="5"/>
<organism>
    <name type="scientific">Aspergillus oryzae (strain ATCC 42149 / RIB 40)</name>
    <name type="common">Yellow koji mold</name>
    <dbReference type="NCBI Taxonomy" id="510516"/>
    <lineage>
        <taxon>Eukaryota</taxon>
        <taxon>Fungi</taxon>
        <taxon>Dikarya</taxon>
        <taxon>Ascomycota</taxon>
        <taxon>Pezizomycotina</taxon>
        <taxon>Eurotiomycetes</taxon>
        <taxon>Eurotiomycetidae</taxon>
        <taxon>Eurotiales</taxon>
        <taxon>Aspergillaceae</taxon>
        <taxon>Aspergillus</taxon>
        <taxon>Aspergillus subgen. Circumdati</taxon>
    </lineage>
</organism>
<dbReference type="EMBL" id="BA000052">
    <property type="protein sequence ID" value="BAE61597.1"/>
    <property type="molecule type" value="Genomic_DNA"/>
</dbReference>
<dbReference type="RefSeq" id="XP_001822730.1">
    <property type="nucleotide sequence ID" value="XM_001822678.2"/>
</dbReference>
<dbReference type="SMR" id="Q2UA18"/>
<dbReference type="STRING" id="510516.Q2UA18"/>
<dbReference type="EnsemblFungi" id="BAE61597">
    <property type="protein sequence ID" value="BAE61597"/>
    <property type="gene ID" value="AO090102000579"/>
</dbReference>
<dbReference type="GeneID" id="5994775"/>
<dbReference type="KEGG" id="aor:AO090102000579"/>
<dbReference type="VEuPathDB" id="FungiDB:AO090102000579"/>
<dbReference type="HOGENOM" id="CLU_045138_1_0_1"/>
<dbReference type="OMA" id="MVQIHDY"/>
<dbReference type="OrthoDB" id="117458at5052"/>
<dbReference type="Proteomes" id="UP000006564">
    <property type="component" value="Chromosome 4"/>
</dbReference>
<dbReference type="GO" id="GO:0032541">
    <property type="term" value="C:cortical endoplasmic reticulum"/>
    <property type="evidence" value="ECO:0007669"/>
    <property type="project" value="TreeGrafter"/>
</dbReference>
<dbReference type="GO" id="GO:0005829">
    <property type="term" value="C:cytosol"/>
    <property type="evidence" value="ECO:0007669"/>
    <property type="project" value="TreeGrafter"/>
</dbReference>
<dbReference type="GO" id="GO:0005789">
    <property type="term" value="C:endoplasmic reticulum membrane"/>
    <property type="evidence" value="ECO:0007669"/>
    <property type="project" value="UniProtKB-SubCell"/>
</dbReference>
<dbReference type="GO" id="GO:0005886">
    <property type="term" value="C:plasma membrane"/>
    <property type="evidence" value="ECO:0007669"/>
    <property type="project" value="TreeGrafter"/>
</dbReference>
<dbReference type="GO" id="GO:0046872">
    <property type="term" value="F:metal ion binding"/>
    <property type="evidence" value="ECO:0007669"/>
    <property type="project" value="UniProtKB-KW"/>
</dbReference>
<dbReference type="GO" id="GO:0008526">
    <property type="term" value="F:phosphatidylinositol transfer activity"/>
    <property type="evidence" value="ECO:0007669"/>
    <property type="project" value="InterPro"/>
</dbReference>
<dbReference type="GO" id="GO:0043001">
    <property type="term" value="P:Golgi to plasma membrane protein transport"/>
    <property type="evidence" value="ECO:0007669"/>
    <property type="project" value="TreeGrafter"/>
</dbReference>
<dbReference type="GO" id="GO:0017157">
    <property type="term" value="P:regulation of exocytosis"/>
    <property type="evidence" value="ECO:0007669"/>
    <property type="project" value="TreeGrafter"/>
</dbReference>
<dbReference type="CDD" id="cd00170">
    <property type="entry name" value="SEC14"/>
    <property type="match status" value="1"/>
</dbReference>
<dbReference type="FunFam" id="3.40.525.10:FF:000017">
    <property type="entry name" value="Phosphatidylinositol transfer protein sfh5"/>
    <property type="match status" value="1"/>
</dbReference>
<dbReference type="Gene3D" id="3.40.525.10">
    <property type="entry name" value="CRAL-TRIO lipid binding domain"/>
    <property type="match status" value="1"/>
</dbReference>
<dbReference type="InterPro" id="IPR001251">
    <property type="entry name" value="CRAL-TRIO_dom"/>
</dbReference>
<dbReference type="InterPro" id="IPR036865">
    <property type="entry name" value="CRAL-TRIO_dom_sf"/>
</dbReference>
<dbReference type="InterPro" id="IPR011074">
    <property type="entry name" value="CRAL/TRIO_N_dom"/>
</dbReference>
<dbReference type="InterPro" id="IPR036273">
    <property type="entry name" value="CRAL/TRIO_N_dom_sf"/>
</dbReference>
<dbReference type="InterPro" id="IPR042938">
    <property type="entry name" value="Sfh5"/>
</dbReference>
<dbReference type="PANTHER" id="PTHR47669">
    <property type="entry name" value="PHOSPHATIDYLINOSITOL TRANSFER PROTEIN SFH5"/>
    <property type="match status" value="1"/>
</dbReference>
<dbReference type="PANTHER" id="PTHR47669:SF1">
    <property type="entry name" value="PHOSPHATIDYLINOSITOL TRANSFER PROTEIN SFH5"/>
    <property type="match status" value="1"/>
</dbReference>
<dbReference type="Pfam" id="PF00650">
    <property type="entry name" value="CRAL_TRIO"/>
    <property type="match status" value="1"/>
</dbReference>
<dbReference type="Pfam" id="PF03765">
    <property type="entry name" value="CRAL_TRIO_N"/>
    <property type="match status" value="1"/>
</dbReference>
<dbReference type="SMART" id="SM00516">
    <property type="entry name" value="SEC14"/>
    <property type="match status" value="1"/>
</dbReference>
<dbReference type="SUPFAM" id="SSF52087">
    <property type="entry name" value="CRAL/TRIO domain"/>
    <property type="match status" value="1"/>
</dbReference>
<dbReference type="SUPFAM" id="SSF46938">
    <property type="entry name" value="CRAL/TRIO N-terminal domain"/>
    <property type="match status" value="1"/>
</dbReference>
<dbReference type="PROSITE" id="PS50191">
    <property type="entry name" value="CRAL_TRIO"/>
    <property type="match status" value="1"/>
</dbReference>
<keyword id="KW-0963">Cytoplasm</keyword>
<keyword id="KW-0256">Endoplasmic reticulum</keyword>
<keyword id="KW-0349">Heme</keyword>
<keyword id="KW-0408">Iron</keyword>
<keyword id="KW-0445">Lipid transport</keyword>
<keyword id="KW-0472">Membrane</keyword>
<keyword id="KW-0479">Metal-binding</keyword>
<keyword id="KW-0492">Microsome</keyword>
<keyword id="KW-1185">Reference proteome</keyword>
<keyword id="KW-0813">Transport</keyword>
<protein>
    <recommendedName>
        <fullName>Phosphatidylinositol transfer protein sfh5</fullName>
        <shortName>PITP sfh5</shortName>
    </recommendedName>
</protein>
<comment type="function">
    <text evidence="2">Non-classical phosphatidylinositol (PtdIns) transfer protein (PITP), which exhibits PtdIns-binding/transfer activity in the absence of detectable PtdCho-binding/transfer activity. Regulates PtdIns(4,5)P2 homeostasis at the plasma membrane. Heme-binding protein that may play a role in organic oxidant-induced stress responses.</text>
</comment>
<comment type="catalytic activity">
    <reaction evidence="2">
        <text>a 1,2-diacyl-sn-glycero-3-phospho-(1D-myo-inositol)(in) = a 1,2-diacyl-sn-glycero-3-phospho-(1D-myo-inositol)(out)</text>
        <dbReference type="Rhea" id="RHEA:38691"/>
        <dbReference type="ChEBI" id="CHEBI:57880"/>
    </reaction>
    <physiologicalReaction direction="left-to-right" evidence="2">
        <dbReference type="Rhea" id="RHEA:38692"/>
    </physiologicalReaction>
</comment>
<comment type="cofactor">
    <cofactor evidence="1">
        <name>heme b</name>
        <dbReference type="ChEBI" id="CHEBI:60344"/>
    </cofactor>
</comment>
<comment type="subcellular location">
    <subcellularLocation>
        <location evidence="2">Cytoplasm</location>
    </subcellularLocation>
    <subcellularLocation>
        <location evidence="2">Endoplasmic reticulum membrane</location>
        <topology evidence="2">Peripheral membrane protein</topology>
    </subcellularLocation>
    <subcellularLocation>
        <location evidence="2">Microsome membrane</location>
        <topology evidence="2">Peripheral membrane protein</topology>
    </subcellularLocation>
</comment>
<comment type="similarity">
    <text evidence="5">Belongs to the SFH5 family.</text>
</comment>
<gene>
    <name type="primary">sfh5</name>
    <name type="ORF">AO090102000579</name>
</gene>
<sequence>MADQQEKTASSAVPETQPPSQTAETTTQTTATPAPEVQTEQTQPTESGPSAANTTTEQPTNPPAAEASKENAAPAPAPAAEDAPSEPAPAQEQQKEEKPADNKPEYLAKNPALSQLFDRLPTVLSNSGHDEMWGVPLRDSSDVPTVNVLIKFLRANEGNVKLAEDQLTKALQWRKQTRPTALVEGRYSAKKFGGLGYLSTYKDADGKETVITWNIYGGVKDLGTTFGNVDEFINWRVALMELAVKDLKMDQATSVIDYEGEDPYQMIQVHDYLNVSFLRMNPSVKAATKKTIDVFATAYPELLREKFFVNVPSIMGWMFAAIKVFLSKNTTRKFHPISNGANLAREFPPAVKEQFPKVYGGSAPDLHEGARTVALEEDNEPAPAPAAPAEPTEEAKPEQEAPKQEPAPEAPKEEAIKEALVEAPKEEPKQPAVEEPAKTDTAVTTQETVAPAEAK</sequence>
<feature type="chain" id="PRO_0000324970" description="Phosphatidylinositol transfer protein sfh5">
    <location>
        <begin position="1"/>
        <end position="455"/>
    </location>
</feature>
<feature type="domain" description="CRAL-TRIO" evidence="3">
    <location>
        <begin position="179"/>
        <end position="367"/>
    </location>
</feature>
<feature type="region of interest" description="Disordered" evidence="4">
    <location>
        <begin position="1"/>
        <end position="106"/>
    </location>
</feature>
<feature type="region of interest" description="Disordered" evidence="4">
    <location>
        <begin position="376"/>
        <end position="455"/>
    </location>
</feature>
<feature type="compositionally biased region" description="Low complexity" evidence="4">
    <location>
        <begin position="14"/>
        <end position="40"/>
    </location>
</feature>
<feature type="compositionally biased region" description="Polar residues" evidence="4">
    <location>
        <begin position="41"/>
        <end position="59"/>
    </location>
</feature>
<feature type="compositionally biased region" description="Low complexity" evidence="4">
    <location>
        <begin position="63"/>
        <end position="82"/>
    </location>
</feature>
<feature type="compositionally biased region" description="Basic and acidic residues" evidence="4">
    <location>
        <begin position="93"/>
        <end position="106"/>
    </location>
</feature>
<feature type="compositionally biased region" description="Basic and acidic residues" evidence="4">
    <location>
        <begin position="393"/>
        <end position="403"/>
    </location>
</feature>
<feature type="compositionally biased region" description="Basic and acidic residues" evidence="4">
    <location>
        <begin position="410"/>
        <end position="429"/>
    </location>
</feature>
<feature type="binding site" evidence="1">
    <location>
        <position position="216"/>
    </location>
    <ligand>
        <name>heme</name>
        <dbReference type="ChEBI" id="CHEBI:30413"/>
    </ligand>
</feature>
<feature type="binding site" evidence="1">
    <location>
        <position position="236"/>
    </location>
    <ligand>
        <name>heme</name>
        <dbReference type="ChEBI" id="CHEBI:30413"/>
    </ligand>
</feature>
<feature type="binding site" evidence="1">
    <location>
        <position position="270"/>
    </location>
    <ligand>
        <name>heme</name>
        <dbReference type="ChEBI" id="CHEBI:30413"/>
    </ligand>
</feature>
<feature type="binding site" description="proximal binding residue" evidence="1">
    <location>
        <position position="272"/>
    </location>
    <ligand>
        <name>heme</name>
        <dbReference type="ChEBI" id="CHEBI:30413"/>
    </ligand>
    <ligandPart>
        <name>Fe</name>
        <dbReference type="ChEBI" id="CHEBI:18248"/>
    </ligandPart>
</feature>
<feature type="binding site" evidence="1">
    <location>
        <position position="306"/>
    </location>
    <ligand>
        <name>heme</name>
        <dbReference type="ChEBI" id="CHEBI:30413"/>
    </ligand>
</feature>